<feature type="initiator methionine" description="Removed" evidence="14">
    <location>
        <position position="1"/>
    </location>
</feature>
<feature type="chain" id="PRO_0000192823" description="Casein kinase I isoform alpha">
    <location>
        <begin position="2"/>
        <end position="337"/>
    </location>
</feature>
<feature type="domain" description="Protein kinase" evidence="2">
    <location>
        <begin position="17"/>
        <end position="285"/>
    </location>
</feature>
<feature type="region of interest" description="Disordered" evidence="4">
    <location>
        <begin position="309"/>
        <end position="337"/>
    </location>
</feature>
<feature type="compositionally biased region" description="Low complexity" evidence="4">
    <location>
        <begin position="309"/>
        <end position="325"/>
    </location>
</feature>
<feature type="active site" description="Proton acceptor" evidence="2 3">
    <location>
        <position position="136"/>
    </location>
</feature>
<feature type="binding site" evidence="2">
    <location>
        <begin position="23"/>
        <end position="31"/>
    </location>
    <ligand>
        <name>ATP</name>
        <dbReference type="ChEBI" id="CHEBI:30616"/>
    </ligand>
</feature>
<feature type="binding site" evidence="2">
    <location>
        <position position="46"/>
    </location>
    <ligand>
        <name>ATP</name>
        <dbReference type="ChEBI" id="CHEBI:30616"/>
    </ligand>
</feature>
<feature type="modified residue" description="N-acetylalanine" evidence="14">
    <location>
        <position position="2"/>
    </location>
</feature>
<feature type="modified residue" description="Phosphoserine" evidence="1">
    <location>
        <position position="4"/>
    </location>
</feature>
<feature type="modified residue" description="N6-acetyllysine" evidence="14">
    <location>
        <position position="8"/>
    </location>
</feature>
<feature type="splice variant" id="VSP_010252" description="In isoform 2." evidence="10 11 12">
    <original>KQTDKTKSNMKGF</original>
    <variation>F</variation>
    <location>
        <begin position="325"/>
        <end position="337"/>
    </location>
</feature>
<feature type="sequence conflict" description="In Ref. 2; AAH48081." evidence="13" ref="2">
    <original>Y</original>
    <variation>N</variation>
    <location>
        <position position="126"/>
    </location>
</feature>
<feature type="sequence conflict" description="In Ref. 1; BAC36161." evidence="13" ref="1">
    <original>R</original>
    <variation>K</variation>
    <location>
        <position position="176"/>
    </location>
</feature>
<sequence length="337" mass="38915">MASSSGSKAEFIVGGKYKLVRKIGSGSFGDIYLAINITNGEEVAVKLESQKARHPQLLYESKLYKILQGGVGIPHIRWYGQEKDYNVLVMDLLGPSLEDLFNFCSRRFTMKTVLMLADQMISRIEYVHTKNFIHRDIKPDNFLMGIGRHCNKLFLIDFGLAKKYRDNRTRQHIPYREDKNLTGTARYASINAHLGIEQSRRDDMESLGYVLMYFNRTSLPWQGLKAATKKQKYEKISEKKMSTPVEVLCKGFPAEFAMYLNYCRGLRFEEAPDYMYLRQLFRILFRTLNHQYDYTFDWTMLKQKAAQQAASSSGQGQQAQTPTGKQTDKTKSNMKGF</sequence>
<organism>
    <name type="scientific">Mus musculus</name>
    <name type="common">Mouse</name>
    <dbReference type="NCBI Taxonomy" id="10090"/>
    <lineage>
        <taxon>Eukaryota</taxon>
        <taxon>Metazoa</taxon>
        <taxon>Chordata</taxon>
        <taxon>Craniata</taxon>
        <taxon>Vertebrata</taxon>
        <taxon>Euteleostomi</taxon>
        <taxon>Mammalia</taxon>
        <taxon>Eutheria</taxon>
        <taxon>Euarchontoglires</taxon>
        <taxon>Glires</taxon>
        <taxon>Rodentia</taxon>
        <taxon>Myomorpha</taxon>
        <taxon>Muroidea</taxon>
        <taxon>Muridae</taxon>
        <taxon>Murinae</taxon>
        <taxon>Mus</taxon>
        <taxon>Mus</taxon>
    </lineage>
</organism>
<evidence type="ECO:0000250" key="1">
    <source>
        <dbReference type="UniProtKB" id="P48729"/>
    </source>
</evidence>
<evidence type="ECO:0000255" key="2">
    <source>
        <dbReference type="PROSITE-ProRule" id="PRU00159"/>
    </source>
</evidence>
<evidence type="ECO:0000255" key="3">
    <source>
        <dbReference type="PROSITE-ProRule" id="PRU10027"/>
    </source>
</evidence>
<evidence type="ECO:0000256" key="4">
    <source>
        <dbReference type="SAM" id="MobiDB-lite"/>
    </source>
</evidence>
<evidence type="ECO:0000269" key="5">
    <source>
    </source>
</evidence>
<evidence type="ECO:0000269" key="6">
    <source>
    </source>
</evidence>
<evidence type="ECO:0000269" key="7">
    <source>
    </source>
</evidence>
<evidence type="ECO:0000269" key="8">
    <source>
    </source>
</evidence>
<evidence type="ECO:0000269" key="9">
    <source>
    </source>
</evidence>
<evidence type="ECO:0000303" key="10">
    <source>
    </source>
</evidence>
<evidence type="ECO:0000303" key="11">
    <source>
    </source>
</evidence>
<evidence type="ECO:0000303" key="12">
    <source>
    </source>
</evidence>
<evidence type="ECO:0000305" key="13"/>
<evidence type="ECO:0007744" key="14">
    <source>
    </source>
</evidence>
<accession>Q8BK63</accession>
<accession>Q3UIL0</accession>
<accession>Q64506</accession>
<accession>Q80XI2</accession>
<accession>Q99LY3</accession>
<dbReference type="EC" id="2.7.11.1"/>
<dbReference type="EMBL" id="AK076070">
    <property type="protein sequence ID" value="BAC36161.1"/>
    <property type="molecule type" value="mRNA"/>
</dbReference>
<dbReference type="EMBL" id="AK078398">
    <property type="protein sequence ID" value="BAC37255.1"/>
    <property type="molecule type" value="mRNA"/>
</dbReference>
<dbReference type="EMBL" id="AK146873">
    <property type="protein sequence ID" value="BAE27496.1"/>
    <property type="molecule type" value="mRNA"/>
</dbReference>
<dbReference type="EMBL" id="BC002171">
    <property type="protein sequence ID" value="AAH02171.1"/>
    <property type="molecule type" value="mRNA"/>
</dbReference>
<dbReference type="EMBL" id="BC048081">
    <property type="protein sequence ID" value="AAH48081.1"/>
    <property type="molecule type" value="mRNA"/>
</dbReference>
<dbReference type="EMBL" id="X90945">
    <property type="protein sequence ID" value="CAA62440.1"/>
    <property type="molecule type" value="mRNA"/>
</dbReference>
<dbReference type="CCDS" id="CCDS37838.1">
    <molecule id="Q8BK63-2"/>
</dbReference>
<dbReference type="CCDS" id="CCDS89254.1">
    <molecule id="Q8BK63-1"/>
</dbReference>
<dbReference type="RefSeq" id="NP_001344429.1">
    <molecule id="Q8BK63-1"/>
    <property type="nucleotide sequence ID" value="NM_001357500.1"/>
</dbReference>
<dbReference type="RefSeq" id="NP_666199.1">
    <molecule id="Q8BK63-2"/>
    <property type="nucleotide sequence ID" value="NM_146087.3"/>
</dbReference>
<dbReference type="RefSeq" id="XP_006526451.1">
    <property type="nucleotide sequence ID" value="XM_006526388.2"/>
</dbReference>
<dbReference type="SMR" id="Q8BK63"/>
<dbReference type="BioGRID" id="220237">
    <property type="interactions" value="22"/>
</dbReference>
<dbReference type="ComplexPortal" id="CPX-103">
    <property type="entry name" value="Beta-catenin destruction core complex, Apc-Axin1-Gsk3b variant"/>
</dbReference>
<dbReference type="ComplexPortal" id="CPX-448">
    <property type="entry name" value="Beta-catenin destruction core complex, Apc2-Axin1-Gsk3b variant"/>
</dbReference>
<dbReference type="ComplexPortal" id="CPX-449">
    <property type="entry name" value="Beta-catenin destruction core complex, Apc-Axin2-Gsk3b variant"/>
</dbReference>
<dbReference type="ComplexPortal" id="CPX-452">
    <property type="entry name" value="Beta-catenin destruction core complex, Apc2-Axin2-Gsk3b"/>
</dbReference>
<dbReference type="ComplexPortal" id="CPX-453">
    <property type="entry name" value="Beta-catenin destruction core complex, Apc-Axin1-Gsk3a variant"/>
</dbReference>
<dbReference type="ComplexPortal" id="CPX-456">
    <property type="entry name" value="Beta-catenin destruction core complex, Apc2-Axin1-Gsk3a variant"/>
</dbReference>
<dbReference type="ComplexPortal" id="CPX-457">
    <property type="entry name" value="Beta-catenin destruction core complex, Apc-Axin2-Gsk3a variant"/>
</dbReference>
<dbReference type="ComplexPortal" id="CPX-458">
    <property type="entry name" value="Beta-catenin destruction core complex, Apc2-Axin2-Gsk3a variant"/>
</dbReference>
<dbReference type="DIP" id="DIP-32408N"/>
<dbReference type="FunCoup" id="Q8BK63">
    <property type="interactions" value="3195"/>
</dbReference>
<dbReference type="IntAct" id="Q8BK63">
    <property type="interactions" value="9"/>
</dbReference>
<dbReference type="MINT" id="Q8BK63"/>
<dbReference type="STRING" id="10090.ENSMUSP00000128871"/>
<dbReference type="ChEMBL" id="CHEMBL5148"/>
<dbReference type="iPTMnet" id="Q8BK63"/>
<dbReference type="PhosphoSitePlus" id="Q8BK63"/>
<dbReference type="PaxDb" id="10090-ENSMUSP00000128871"/>
<dbReference type="ProteomicsDB" id="263393">
    <molecule id="Q8BK63-1"/>
</dbReference>
<dbReference type="ProteomicsDB" id="263394">
    <molecule id="Q8BK63-2"/>
</dbReference>
<dbReference type="Pumba" id="Q8BK63"/>
<dbReference type="Antibodypedia" id="27829">
    <property type="antibodies" value="659 antibodies from 39 providers"/>
</dbReference>
<dbReference type="Ensembl" id="ENSMUST00000165123.8">
    <molecule id="Q8BK63-2"/>
    <property type="protein sequence ID" value="ENSMUSP00000128871.2"/>
    <property type="gene ID" value="ENSMUSG00000024576.15"/>
</dbReference>
<dbReference type="Ensembl" id="ENSMUST00000165721.8">
    <molecule id="Q8BK63-1"/>
    <property type="protein sequence ID" value="ENSMUSP00000132083.2"/>
    <property type="gene ID" value="ENSMUSG00000024576.15"/>
</dbReference>
<dbReference type="GeneID" id="93687"/>
<dbReference type="UCSC" id="uc008fcc.1">
    <molecule id="Q8BK63-1"/>
    <property type="organism name" value="mouse"/>
</dbReference>
<dbReference type="AGR" id="MGI:1934950"/>
<dbReference type="MGI" id="MGI:1934950">
    <property type="gene designation" value="Csnk1a1"/>
</dbReference>
<dbReference type="VEuPathDB" id="HostDB:ENSMUSG00000024576"/>
<dbReference type="eggNOG" id="KOG1163">
    <property type="taxonomic scope" value="Eukaryota"/>
</dbReference>
<dbReference type="GeneTree" id="ENSGT00940000153700"/>
<dbReference type="HOGENOM" id="CLU_019279_2_7_1"/>
<dbReference type="InParanoid" id="Q8BK63"/>
<dbReference type="TreeFam" id="TF354246"/>
<dbReference type="BRENDA" id="2.7.11.1">
    <property type="organism ID" value="3474"/>
</dbReference>
<dbReference type="Reactome" id="R-MMU-195253">
    <property type="pathway name" value="Degradation of beta-catenin by the destruction complex"/>
</dbReference>
<dbReference type="Reactome" id="R-MMU-196299">
    <property type="pathway name" value="Beta-catenin phosphorylation cascade"/>
</dbReference>
<dbReference type="Reactome" id="R-MMU-4641262">
    <property type="pathway name" value="Disassembly of the destruction complex and recruitment of AXIN to the membrane"/>
</dbReference>
<dbReference type="Reactome" id="R-MMU-5610785">
    <property type="pathway name" value="GLI3 is processed to GLI3R by the proteasome"/>
</dbReference>
<dbReference type="Reactome" id="R-MMU-5635838">
    <property type="pathway name" value="Activation of SMO"/>
</dbReference>
<dbReference type="BioGRID-ORCS" id="93687">
    <property type="hits" value="26 hits in 80 CRISPR screens"/>
</dbReference>
<dbReference type="CD-CODE" id="CE726F99">
    <property type="entry name" value="Postsynaptic density"/>
</dbReference>
<dbReference type="ChiTaRS" id="Csnk1a1">
    <property type="organism name" value="mouse"/>
</dbReference>
<dbReference type="PRO" id="PR:Q8BK63"/>
<dbReference type="Proteomes" id="UP000000589">
    <property type="component" value="Chromosome 18"/>
</dbReference>
<dbReference type="RNAct" id="Q8BK63">
    <property type="molecule type" value="protein"/>
</dbReference>
<dbReference type="Bgee" id="ENSMUSG00000024576">
    <property type="expression patterns" value="Expressed in renal corpuscle and 269 other cell types or tissues"/>
</dbReference>
<dbReference type="ExpressionAtlas" id="Q8BK63">
    <property type="expression patterns" value="baseline and differential"/>
</dbReference>
<dbReference type="GO" id="GO:0030877">
    <property type="term" value="C:beta-catenin destruction complex"/>
    <property type="evidence" value="ECO:0000250"/>
    <property type="project" value="ParkinsonsUK-UCL"/>
</dbReference>
<dbReference type="GO" id="GO:0005813">
    <property type="term" value="C:centrosome"/>
    <property type="evidence" value="ECO:0007669"/>
    <property type="project" value="UniProtKB-SubCell"/>
</dbReference>
<dbReference type="GO" id="GO:0036064">
    <property type="term" value="C:ciliary basal body"/>
    <property type="evidence" value="ECO:0000314"/>
    <property type="project" value="UniProtKB"/>
</dbReference>
<dbReference type="GO" id="GO:0005929">
    <property type="term" value="C:cilium"/>
    <property type="evidence" value="ECO:0000304"/>
    <property type="project" value="Reactome"/>
</dbReference>
<dbReference type="GO" id="GO:0005829">
    <property type="term" value="C:cytosol"/>
    <property type="evidence" value="ECO:0000304"/>
    <property type="project" value="Reactome"/>
</dbReference>
<dbReference type="GO" id="GO:0000776">
    <property type="term" value="C:kinetochore"/>
    <property type="evidence" value="ECO:0007669"/>
    <property type="project" value="UniProtKB-KW"/>
</dbReference>
<dbReference type="GO" id="GO:0016607">
    <property type="term" value="C:nuclear speck"/>
    <property type="evidence" value="ECO:0000250"/>
    <property type="project" value="UniProtKB"/>
</dbReference>
<dbReference type="GO" id="GO:1990904">
    <property type="term" value="C:ribonucleoprotein complex"/>
    <property type="evidence" value="ECO:0000314"/>
    <property type="project" value="MGI"/>
</dbReference>
<dbReference type="GO" id="GO:0005819">
    <property type="term" value="C:spindle"/>
    <property type="evidence" value="ECO:0000314"/>
    <property type="project" value="UniProtKB"/>
</dbReference>
<dbReference type="GO" id="GO:0005524">
    <property type="term" value="F:ATP binding"/>
    <property type="evidence" value="ECO:0007669"/>
    <property type="project" value="UniProtKB-KW"/>
</dbReference>
<dbReference type="GO" id="GO:0004672">
    <property type="term" value="F:protein kinase activity"/>
    <property type="evidence" value="ECO:0000314"/>
    <property type="project" value="UniProtKB"/>
</dbReference>
<dbReference type="GO" id="GO:0106310">
    <property type="term" value="F:protein serine kinase activity"/>
    <property type="evidence" value="ECO:0007669"/>
    <property type="project" value="RHEA"/>
</dbReference>
<dbReference type="GO" id="GO:0004674">
    <property type="term" value="F:protein serine/threonine kinase activity"/>
    <property type="evidence" value="ECO:0000314"/>
    <property type="project" value="UniProtKB"/>
</dbReference>
<dbReference type="GO" id="GO:0051301">
    <property type="term" value="P:cell division"/>
    <property type="evidence" value="ECO:0007669"/>
    <property type="project" value="UniProtKB-KW"/>
</dbReference>
<dbReference type="GO" id="GO:0000902">
    <property type="term" value="P:cell morphogenesis"/>
    <property type="evidence" value="ECO:0000316"/>
    <property type="project" value="MGI"/>
</dbReference>
<dbReference type="GO" id="GO:0007030">
    <property type="term" value="P:Golgi organization"/>
    <property type="evidence" value="ECO:0000250"/>
    <property type="project" value="ParkinsonsUK-UCL"/>
</dbReference>
<dbReference type="GO" id="GO:0045104">
    <property type="term" value="P:intermediate filament cytoskeleton organization"/>
    <property type="evidence" value="ECO:0000250"/>
    <property type="project" value="UniProtKB"/>
</dbReference>
<dbReference type="GO" id="GO:1900226">
    <property type="term" value="P:negative regulation of NLRP3 inflammasome complex assembly"/>
    <property type="evidence" value="ECO:0000314"/>
    <property type="project" value="UniProtKB"/>
</dbReference>
<dbReference type="GO" id="GO:0032436">
    <property type="term" value="P:positive regulation of proteasomal ubiquitin-dependent protein catabolic process"/>
    <property type="evidence" value="ECO:0000250"/>
    <property type="project" value="ParkinsonsUK-UCL"/>
</dbReference>
<dbReference type="GO" id="GO:0043161">
    <property type="term" value="P:proteasome-mediated ubiquitin-dependent protein catabolic process"/>
    <property type="evidence" value="ECO:0000303"/>
    <property type="project" value="ComplexPortal"/>
</dbReference>
<dbReference type="GO" id="GO:0006468">
    <property type="term" value="P:protein phosphorylation"/>
    <property type="evidence" value="ECO:0000314"/>
    <property type="project" value="UniProtKB"/>
</dbReference>
<dbReference type="GO" id="GO:0016055">
    <property type="term" value="P:Wnt signaling pathway"/>
    <property type="evidence" value="ECO:0007669"/>
    <property type="project" value="UniProtKB-KW"/>
</dbReference>
<dbReference type="CDD" id="cd14128">
    <property type="entry name" value="STKc_CK1_alpha"/>
    <property type="match status" value="1"/>
</dbReference>
<dbReference type="FunFam" id="1.10.510.10:FF:000120">
    <property type="entry name" value="Casein kinase I isoform alpha"/>
    <property type="match status" value="1"/>
</dbReference>
<dbReference type="FunFam" id="3.30.200.20:FF:000538">
    <property type="entry name" value="Putative Casein kinase I"/>
    <property type="match status" value="1"/>
</dbReference>
<dbReference type="Gene3D" id="1.10.510.10">
    <property type="entry name" value="Transferase(Phosphotransferase) domain 1"/>
    <property type="match status" value="1"/>
</dbReference>
<dbReference type="InterPro" id="IPR050235">
    <property type="entry name" value="CK1_Ser-Thr_kinase"/>
</dbReference>
<dbReference type="InterPro" id="IPR011009">
    <property type="entry name" value="Kinase-like_dom_sf"/>
</dbReference>
<dbReference type="InterPro" id="IPR000719">
    <property type="entry name" value="Prot_kinase_dom"/>
</dbReference>
<dbReference type="InterPro" id="IPR017441">
    <property type="entry name" value="Protein_kinase_ATP_BS"/>
</dbReference>
<dbReference type="InterPro" id="IPR008271">
    <property type="entry name" value="Ser/Thr_kinase_AS"/>
</dbReference>
<dbReference type="PANTHER" id="PTHR11909">
    <property type="entry name" value="CASEIN KINASE-RELATED"/>
    <property type="match status" value="1"/>
</dbReference>
<dbReference type="Pfam" id="PF00069">
    <property type="entry name" value="Pkinase"/>
    <property type="match status" value="1"/>
</dbReference>
<dbReference type="SMART" id="SM00220">
    <property type="entry name" value="S_TKc"/>
    <property type="match status" value="1"/>
</dbReference>
<dbReference type="SUPFAM" id="SSF56112">
    <property type="entry name" value="Protein kinase-like (PK-like)"/>
    <property type="match status" value="1"/>
</dbReference>
<dbReference type="PROSITE" id="PS00107">
    <property type="entry name" value="PROTEIN_KINASE_ATP"/>
    <property type="match status" value="1"/>
</dbReference>
<dbReference type="PROSITE" id="PS50011">
    <property type="entry name" value="PROTEIN_KINASE_DOM"/>
    <property type="match status" value="1"/>
</dbReference>
<dbReference type="PROSITE" id="PS00108">
    <property type="entry name" value="PROTEIN_KINASE_ST"/>
    <property type="match status" value="1"/>
</dbReference>
<keyword id="KW-0007">Acetylation</keyword>
<keyword id="KW-0025">Alternative splicing</keyword>
<keyword id="KW-0067">ATP-binding</keyword>
<keyword id="KW-0131">Cell cycle</keyword>
<keyword id="KW-0132">Cell division</keyword>
<keyword id="KW-0966">Cell projection</keyword>
<keyword id="KW-0137">Centromere</keyword>
<keyword id="KW-0158">Chromosome</keyword>
<keyword id="KW-0963">Cytoplasm</keyword>
<keyword id="KW-0206">Cytoskeleton</keyword>
<keyword id="KW-0418">Kinase</keyword>
<keyword id="KW-0995">Kinetochore</keyword>
<keyword id="KW-0498">Mitosis</keyword>
<keyword id="KW-0547">Nucleotide-binding</keyword>
<keyword id="KW-0539">Nucleus</keyword>
<keyword id="KW-0597">Phosphoprotein</keyword>
<keyword id="KW-1185">Reference proteome</keyword>
<keyword id="KW-0723">Serine/threonine-protein kinase</keyword>
<keyword id="KW-0808">Transferase</keyword>
<keyword id="KW-0879">Wnt signaling pathway</keyword>
<comment type="function">
    <text evidence="1 5 8">Casein kinases are operationally defined by their preferential utilization of acidic proteins such as caseins as substrates (By similarity). Can phosphorylate a large number of proteins (By similarity). Participates in Wnt signaling (By similarity). Phosphorylates CTNNB1 at 'Ser-45' (By similarity). May phosphorylate PER1 and PER2 (PubMed:21930935). May play a role in segregating chromosomes during mitosis (By similarity). May play a role in keratin cytoskeleton disassembly and thereby, it may regulate epithelial cell migration (By similarity). Acts as a positive regulator of mTORC1 and mTORC2 signaling in response to nutrients by mediating phosphorylation of DEPTOR inhibitor (By similarity). Acts as an inhibitor of NLRP3 inflammasome assembly by mediating phosphorylation of NLRP3 (PubMed:34615873).</text>
</comment>
<comment type="catalytic activity">
    <reaction evidence="8">
        <text>L-seryl-[protein] + ATP = O-phospho-L-seryl-[protein] + ADP + H(+)</text>
        <dbReference type="Rhea" id="RHEA:17989"/>
        <dbReference type="Rhea" id="RHEA-COMP:9863"/>
        <dbReference type="Rhea" id="RHEA-COMP:11604"/>
        <dbReference type="ChEBI" id="CHEBI:15378"/>
        <dbReference type="ChEBI" id="CHEBI:29999"/>
        <dbReference type="ChEBI" id="CHEBI:30616"/>
        <dbReference type="ChEBI" id="CHEBI:83421"/>
        <dbReference type="ChEBI" id="CHEBI:456216"/>
        <dbReference type="EC" id="2.7.11.1"/>
    </reaction>
    <physiologicalReaction direction="left-to-right" evidence="8">
        <dbReference type="Rhea" id="RHEA:17990"/>
    </physiologicalReaction>
</comment>
<comment type="catalytic activity">
    <reaction>
        <text>L-threonyl-[protein] + ATP = O-phospho-L-threonyl-[protein] + ADP + H(+)</text>
        <dbReference type="Rhea" id="RHEA:46608"/>
        <dbReference type="Rhea" id="RHEA-COMP:11060"/>
        <dbReference type="Rhea" id="RHEA-COMP:11605"/>
        <dbReference type="ChEBI" id="CHEBI:15378"/>
        <dbReference type="ChEBI" id="CHEBI:30013"/>
        <dbReference type="ChEBI" id="CHEBI:30616"/>
        <dbReference type="ChEBI" id="CHEBI:61977"/>
        <dbReference type="ChEBI" id="CHEBI:456216"/>
        <dbReference type="EC" id="2.7.11.1"/>
    </reaction>
</comment>
<comment type="subunit">
    <text evidence="1 9">Interacts with the Axin complex (By similarity). Interacts with TUT1, leading to TUT1 phosphorylation (By similarity). Interacts with FAM83A, FAM83B, FAM83C, FAM83D, FAM83E, FAM83F, FAM83G and FAM83H (via DUF1669) (PubMed:35931121). Interaction with FAM83H recruits CSNK1A1 to keratin filaments (By similarity).</text>
</comment>
<comment type="subcellular location">
    <subcellularLocation>
        <location evidence="1">Cytoplasm</location>
    </subcellularLocation>
    <subcellularLocation>
        <location evidence="1">Cytoplasm</location>
        <location evidence="1">Cytoskeleton</location>
        <location evidence="1">Microtubule organizing center</location>
        <location evidence="1">Centrosome</location>
    </subcellularLocation>
    <subcellularLocation>
        <location evidence="1">Chromosome</location>
        <location evidence="1">Centromere</location>
        <location evidence="1">Kinetochore</location>
    </subcellularLocation>
    <subcellularLocation>
        <location evidence="1">Nucleus speckle</location>
    </subcellularLocation>
    <subcellularLocation>
        <location evidence="6">Cytoplasm</location>
        <location evidence="6">Cytoskeleton</location>
        <location evidence="6">Cilium basal body</location>
    </subcellularLocation>
    <subcellularLocation>
        <location evidence="7">Cytoplasm</location>
        <location evidence="7">Cytoskeleton</location>
        <location evidence="7">Spindle</location>
    </subcellularLocation>
    <text evidence="1">Localizes to the centrosome in interphase cells, and to kinetochore fibers during mitosis. Also recruited to the keratin cytoskeleton.</text>
</comment>
<comment type="alternative products">
    <event type="alternative splicing"/>
    <isoform>
        <id>Q8BK63-1</id>
        <name>1</name>
        <sequence type="displayed"/>
    </isoform>
    <isoform>
        <id>Q8BK63-2</id>
        <name>2</name>
        <sequence type="described" ref="VSP_010252"/>
    </isoform>
</comment>
<comment type="PTM">
    <text evidence="1">Phosphorylated by MTOR in response to mitogenic stimulation, leading to its activation.</text>
</comment>
<comment type="similarity">
    <text evidence="13">Belongs to the protein kinase superfamily. CK1 Ser/Thr protein kinase family. Casein kinase I subfamily.</text>
</comment>
<name>KC1A_MOUSE</name>
<proteinExistence type="evidence at protein level"/>
<gene>
    <name type="primary">Csnk1a1</name>
</gene>
<reference key="1">
    <citation type="journal article" date="2005" name="Science">
        <title>The transcriptional landscape of the mammalian genome.</title>
        <authorList>
            <person name="Carninci P."/>
            <person name="Kasukawa T."/>
            <person name="Katayama S."/>
            <person name="Gough J."/>
            <person name="Frith M.C."/>
            <person name="Maeda N."/>
            <person name="Oyama R."/>
            <person name="Ravasi T."/>
            <person name="Lenhard B."/>
            <person name="Wells C."/>
            <person name="Kodzius R."/>
            <person name="Shimokawa K."/>
            <person name="Bajic V.B."/>
            <person name="Brenner S.E."/>
            <person name="Batalov S."/>
            <person name="Forrest A.R."/>
            <person name="Zavolan M."/>
            <person name="Davis M.J."/>
            <person name="Wilming L.G."/>
            <person name="Aidinis V."/>
            <person name="Allen J.E."/>
            <person name="Ambesi-Impiombato A."/>
            <person name="Apweiler R."/>
            <person name="Aturaliya R.N."/>
            <person name="Bailey T.L."/>
            <person name="Bansal M."/>
            <person name="Baxter L."/>
            <person name="Beisel K.W."/>
            <person name="Bersano T."/>
            <person name="Bono H."/>
            <person name="Chalk A.M."/>
            <person name="Chiu K.P."/>
            <person name="Choudhary V."/>
            <person name="Christoffels A."/>
            <person name="Clutterbuck D.R."/>
            <person name="Crowe M.L."/>
            <person name="Dalla E."/>
            <person name="Dalrymple B.P."/>
            <person name="de Bono B."/>
            <person name="Della Gatta G."/>
            <person name="di Bernardo D."/>
            <person name="Down T."/>
            <person name="Engstrom P."/>
            <person name="Fagiolini M."/>
            <person name="Faulkner G."/>
            <person name="Fletcher C.F."/>
            <person name="Fukushima T."/>
            <person name="Furuno M."/>
            <person name="Futaki S."/>
            <person name="Gariboldi M."/>
            <person name="Georgii-Hemming P."/>
            <person name="Gingeras T.R."/>
            <person name="Gojobori T."/>
            <person name="Green R.E."/>
            <person name="Gustincich S."/>
            <person name="Harbers M."/>
            <person name="Hayashi Y."/>
            <person name="Hensch T.K."/>
            <person name="Hirokawa N."/>
            <person name="Hill D."/>
            <person name="Huminiecki L."/>
            <person name="Iacono M."/>
            <person name="Ikeo K."/>
            <person name="Iwama A."/>
            <person name="Ishikawa T."/>
            <person name="Jakt M."/>
            <person name="Kanapin A."/>
            <person name="Katoh M."/>
            <person name="Kawasawa Y."/>
            <person name="Kelso J."/>
            <person name="Kitamura H."/>
            <person name="Kitano H."/>
            <person name="Kollias G."/>
            <person name="Krishnan S.P."/>
            <person name="Kruger A."/>
            <person name="Kummerfeld S.K."/>
            <person name="Kurochkin I.V."/>
            <person name="Lareau L.F."/>
            <person name="Lazarevic D."/>
            <person name="Lipovich L."/>
            <person name="Liu J."/>
            <person name="Liuni S."/>
            <person name="McWilliam S."/>
            <person name="Madan Babu M."/>
            <person name="Madera M."/>
            <person name="Marchionni L."/>
            <person name="Matsuda H."/>
            <person name="Matsuzawa S."/>
            <person name="Miki H."/>
            <person name="Mignone F."/>
            <person name="Miyake S."/>
            <person name="Morris K."/>
            <person name="Mottagui-Tabar S."/>
            <person name="Mulder N."/>
            <person name="Nakano N."/>
            <person name="Nakauchi H."/>
            <person name="Ng P."/>
            <person name="Nilsson R."/>
            <person name="Nishiguchi S."/>
            <person name="Nishikawa S."/>
            <person name="Nori F."/>
            <person name="Ohara O."/>
            <person name="Okazaki Y."/>
            <person name="Orlando V."/>
            <person name="Pang K.C."/>
            <person name="Pavan W.J."/>
            <person name="Pavesi G."/>
            <person name="Pesole G."/>
            <person name="Petrovsky N."/>
            <person name="Piazza S."/>
            <person name="Reed J."/>
            <person name="Reid J.F."/>
            <person name="Ring B.Z."/>
            <person name="Ringwald M."/>
            <person name="Rost B."/>
            <person name="Ruan Y."/>
            <person name="Salzberg S.L."/>
            <person name="Sandelin A."/>
            <person name="Schneider C."/>
            <person name="Schoenbach C."/>
            <person name="Sekiguchi K."/>
            <person name="Semple C.A."/>
            <person name="Seno S."/>
            <person name="Sessa L."/>
            <person name="Sheng Y."/>
            <person name="Shibata Y."/>
            <person name="Shimada H."/>
            <person name="Shimada K."/>
            <person name="Silva D."/>
            <person name="Sinclair B."/>
            <person name="Sperling S."/>
            <person name="Stupka E."/>
            <person name="Sugiura K."/>
            <person name="Sultana R."/>
            <person name="Takenaka Y."/>
            <person name="Taki K."/>
            <person name="Tammoja K."/>
            <person name="Tan S.L."/>
            <person name="Tang S."/>
            <person name="Taylor M.S."/>
            <person name="Tegner J."/>
            <person name="Teichmann S.A."/>
            <person name="Ueda H.R."/>
            <person name="van Nimwegen E."/>
            <person name="Verardo R."/>
            <person name="Wei C.L."/>
            <person name="Yagi K."/>
            <person name="Yamanishi H."/>
            <person name="Zabarovsky E."/>
            <person name="Zhu S."/>
            <person name="Zimmer A."/>
            <person name="Hide W."/>
            <person name="Bult C."/>
            <person name="Grimmond S.M."/>
            <person name="Teasdale R.D."/>
            <person name="Liu E.T."/>
            <person name="Brusic V."/>
            <person name="Quackenbush J."/>
            <person name="Wahlestedt C."/>
            <person name="Mattick J.S."/>
            <person name="Hume D.A."/>
            <person name="Kai C."/>
            <person name="Sasaki D."/>
            <person name="Tomaru Y."/>
            <person name="Fukuda S."/>
            <person name="Kanamori-Katayama M."/>
            <person name="Suzuki M."/>
            <person name="Aoki J."/>
            <person name="Arakawa T."/>
            <person name="Iida J."/>
            <person name="Imamura K."/>
            <person name="Itoh M."/>
            <person name="Kato T."/>
            <person name="Kawaji H."/>
            <person name="Kawagashira N."/>
            <person name="Kawashima T."/>
            <person name="Kojima M."/>
            <person name="Kondo S."/>
            <person name="Konno H."/>
            <person name="Nakano K."/>
            <person name="Ninomiya N."/>
            <person name="Nishio T."/>
            <person name="Okada M."/>
            <person name="Plessy C."/>
            <person name="Shibata K."/>
            <person name="Shiraki T."/>
            <person name="Suzuki S."/>
            <person name="Tagami M."/>
            <person name="Waki K."/>
            <person name="Watahiki A."/>
            <person name="Okamura-Oho Y."/>
            <person name="Suzuki H."/>
            <person name="Kawai J."/>
            <person name="Hayashizaki Y."/>
        </authorList>
    </citation>
    <scope>NUCLEOTIDE SEQUENCE [LARGE SCALE MRNA] (ISOFORMS 1 AND 2)</scope>
    <source>
        <strain>C57BL/6J</strain>
        <tissue>Liver</tissue>
    </source>
</reference>
<reference key="2">
    <citation type="journal article" date="2004" name="Genome Res.">
        <title>The status, quality, and expansion of the NIH full-length cDNA project: the Mammalian Gene Collection (MGC).</title>
        <authorList>
            <consortium name="The MGC Project Team"/>
        </authorList>
    </citation>
    <scope>NUCLEOTIDE SEQUENCE [LARGE SCALE MRNA] (ISOFORMS 1 AND 2)</scope>
    <source>
        <tissue>Olfactory epithelium</tissue>
    </source>
</reference>
<reference key="3">
    <citation type="journal article" date="1997" name="DNA Seq.">
        <title>Tissue-specific distribution of the mouse casein kinase I alpha mRNA.</title>
        <authorList>
            <person name="McInnes C."/>
            <person name="Leader D.P."/>
        </authorList>
    </citation>
    <scope>NUCLEOTIDE SEQUENCE [MRNA] OF 299-325 (ISOFORM 2)</scope>
</reference>
<reference key="4">
    <citation type="journal article" date="2010" name="Cell">
        <title>A tissue-specific atlas of mouse protein phosphorylation and expression.</title>
        <authorList>
            <person name="Huttlin E.L."/>
            <person name="Jedrychowski M.P."/>
            <person name="Elias J.E."/>
            <person name="Goswami T."/>
            <person name="Rad R."/>
            <person name="Beausoleil S.A."/>
            <person name="Villen J."/>
            <person name="Haas W."/>
            <person name="Sowa M.E."/>
            <person name="Gygi S.P."/>
        </authorList>
    </citation>
    <scope>IDENTIFICATION BY MASS SPECTROMETRY [LARGE SCALE ANALYSIS]</scope>
    <source>
        <tissue>Brain</tissue>
        <tissue>Heart</tissue>
        <tissue>Kidney</tissue>
        <tissue>Liver</tissue>
        <tissue>Lung</tissue>
        <tissue>Pancreas</tissue>
        <tissue>Spleen</tissue>
        <tissue>Testis</tissue>
    </source>
</reference>
<reference key="5">
    <citation type="journal article" date="2011" name="Proc. Natl. Acad. Sci. U.S.A.">
        <title>The period of the circadian oscillator is primarily determined by the balance between casein kinase 1 and protein phosphatase 1.</title>
        <authorList>
            <person name="Lee H.M."/>
            <person name="Chen R."/>
            <person name="Kim H."/>
            <person name="Etchegaray J.P."/>
            <person name="Weaver D.R."/>
            <person name="Lee C."/>
        </authorList>
    </citation>
    <scope>FUNCTION AS PER1 AND PER2 KINASE</scope>
</reference>
<reference key="6">
    <citation type="journal article" date="2013" name="Mol. Cell">
        <title>SIRT5-mediated lysine desuccinylation impacts diverse metabolic pathways.</title>
        <authorList>
            <person name="Park J."/>
            <person name="Chen Y."/>
            <person name="Tishkoff D.X."/>
            <person name="Peng C."/>
            <person name="Tan M."/>
            <person name="Dai L."/>
            <person name="Xie Z."/>
            <person name="Zhang Y."/>
            <person name="Zwaans B.M."/>
            <person name="Skinner M.E."/>
            <person name="Lombard D.B."/>
            <person name="Zhao Y."/>
        </authorList>
    </citation>
    <scope>ACETYLATION [LARGE SCALE ANALYSIS] AT ALA-2 AND LYS-8</scope>
    <scope>CLEAVAGE OF INITIATOR METHIONINE [LARGE SCALE ANALYSIS]</scope>
    <scope>IDENTIFICATION BY MASS SPECTROMETRY [LARGE SCALE ANALYSIS]</scope>
    <source>
        <tissue>Embryonic fibroblast</tissue>
    </source>
</reference>
<reference key="7">
    <citation type="journal article" date="2015" name="Genes Dev.">
        <title>Bifurcating action of Smoothened in Hedgehog signaling is mediated by Dlg5.</title>
        <authorList>
            <person name="Chong Y.C."/>
            <person name="Mann R.K."/>
            <person name="Zhao C."/>
            <person name="Kato M."/>
            <person name="Beachy P.A."/>
        </authorList>
    </citation>
    <scope>SUBCELLULAR LOCATION</scope>
</reference>
<reference key="8">
    <citation type="journal article" date="2019" name="EMBO Rep.">
        <title>FAM83D directs protein kinase CK1alpha to the mitotic spindle for proper spindle positioning.</title>
        <authorList>
            <person name="Fulcher L.J."/>
            <person name="He Z."/>
            <person name="Mei L."/>
            <person name="Macartney T.J."/>
            <person name="Wood N.T."/>
            <person name="Prescott A.R."/>
            <person name="Whigham A.J."/>
            <person name="Varghese J."/>
            <person name="Gourlay R."/>
            <person name="Ball G."/>
            <person name="Clarke R."/>
            <person name="Campbell D.G."/>
            <person name="Maxwell C.A."/>
            <person name="Sapkota G.P."/>
        </authorList>
    </citation>
    <scope>SUBCELLULAR LOCATION</scope>
</reference>
<reference key="9">
    <citation type="journal article" date="2021" name="Nat. Commun.">
        <title>NLRP3 phosphorylation in its LRR domain critically regulates inflammasome assembly.</title>
        <authorList>
            <person name="Niu T."/>
            <person name="De Rosny C."/>
            <person name="Chautard S."/>
            <person name="Rey A."/>
            <person name="Patoli D."/>
            <person name="Groslambert M."/>
            <person name="Cosson C."/>
            <person name="Lagrange B."/>
            <person name="Zhang Z."/>
            <person name="Visvikis O."/>
            <person name="Hacot S."/>
            <person name="Hologne M."/>
            <person name="Walker O."/>
            <person name="Wong J."/>
            <person name="Wang P."/>
            <person name="Ricci R."/>
            <person name="Henry T."/>
            <person name="Boyer L."/>
            <person name="Petrilli V."/>
            <person name="Py B.F."/>
        </authorList>
    </citation>
    <scope>FUNCTION</scope>
    <scope>CATALYTIC ACTIVITY</scope>
</reference>
<reference key="10">
    <citation type="journal article" date="2022" name="J. Biol. Chem.">
        <title>Proto-oncogene FAM83A contributes to casein kinase 1-mediated mitochondrial maintenance and white adipocyte differentiation.</title>
        <authorList>
            <person name="Huang K."/>
            <person name="Jia Z."/>
            <person name="Li H."/>
            <person name="Peng Y."/>
            <person name="Chen X."/>
            <person name="Luo N."/>
            <person name="Song T."/>
            <person name="Wang Y."/>
            <person name="Shi X."/>
            <person name="Kuang S."/>
            <person name="Yang G."/>
        </authorList>
    </citation>
    <scope>INTERACTION WITH FAM83A</scope>
</reference>
<protein>
    <recommendedName>
        <fullName>Casein kinase I isoform alpha</fullName>
        <shortName>CKI-alpha</shortName>
        <ecNumber>2.7.11.1</ecNumber>
    </recommendedName>
    <alternativeName>
        <fullName>CK1</fullName>
    </alternativeName>
</protein>